<protein>
    <recommendedName>
        <fullName>AP-5 complex subunit mu-1</fullName>
    </recommendedName>
    <alternativeName>
        <fullName>Adaptor-related protein complex 5 subunit mu-1</fullName>
        <shortName>Mu5</shortName>
    </alternativeName>
</protein>
<reference evidence="4" key="1">
    <citation type="journal article" date="2005" name="BMC Genomics">
        <title>Characterization of 954 bovine full-CDS cDNA sequences.</title>
        <authorList>
            <person name="Harhay G.P."/>
            <person name="Sonstegard T.S."/>
            <person name="Keele J.W."/>
            <person name="Heaton M.P."/>
            <person name="Clawson M.L."/>
            <person name="Snelling W.M."/>
            <person name="Wiedmann R.T."/>
            <person name="Van Tassell C.P."/>
            <person name="Smith T.P.L."/>
        </authorList>
    </citation>
    <scope>NUCLEOTIDE SEQUENCE [LARGE SCALE MRNA]</scope>
</reference>
<organism>
    <name type="scientific">Bos taurus</name>
    <name type="common">Bovine</name>
    <dbReference type="NCBI Taxonomy" id="9913"/>
    <lineage>
        <taxon>Eukaryota</taxon>
        <taxon>Metazoa</taxon>
        <taxon>Chordata</taxon>
        <taxon>Craniata</taxon>
        <taxon>Vertebrata</taxon>
        <taxon>Euteleostomi</taxon>
        <taxon>Mammalia</taxon>
        <taxon>Eutheria</taxon>
        <taxon>Laurasiatheria</taxon>
        <taxon>Artiodactyla</taxon>
        <taxon>Ruminantia</taxon>
        <taxon>Pecora</taxon>
        <taxon>Bovidae</taxon>
        <taxon>Bovinae</taxon>
        <taxon>Bos</taxon>
    </lineage>
</organism>
<gene>
    <name type="primary">AP5M1</name>
</gene>
<sequence>MAQRAVWLISHESGTPLGGIVKFSRRYPTVEKRAKVFNGASYVPVPEDGPFLKALLFELRLLDDEKDFLESRDSCSHINKTSIYGVPVGGEELWPVVAFLKNGMIYACVPLVEQTLSPRPPLISISGISQGFELLFGVQDFLSSGQKTDSELNTKLSQLSDLLLQTCPFGTLLDANLQNSLDSINSASVTHLQKQPAWKTGTYKGKPQVSISITEKVNSMQYDKQEIADTWQVVGVVTCKCDLEGSMPNVTISLSLPTNGSPLQDILVHPCVTSLDSAILTSSSIDAMDDSAFSGPYKFPLTPPLESFNLCYYTSQVPVPPILGFYQVKEEEVQLKITVNLKLHESVKNSFEFCEAHIPFYNRGPITHVEYKASFGQLEVFREKSLLVWIIGQKFPKSMEISLSGTITFGAKNHEKQPFDQICIGGTAYLKLHFRILDYTLTGCYVDQHSVQVFASGKPKISTYRKLISSDYYIWNSKAPAPVTYGSLLL</sequence>
<keyword id="KW-0963">Cytoplasm</keyword>
<keyword id="KW-0967">Endosome</keyword>
<keyword id="KW-0458">Lysosome</keyword>
<keyword id="KW-0472">Membrane</keyword>
<keyword id="KW-0653">Protein transport</keyword>
<keyword id="KW-1185">Reference proteome</keyword>
<keyword id="KW-0813">Transport</keyword>
<name>AP5M1_BOVIN</name>
<evidence type="ECO:0000250" key="1"/>
<evidence type="ECO:0000255" key="2"/>
<evidence type="ECO:0000255" key="3">
    <source>
        <dbReference type="PROSITE-ProRule" id="PRU00404"/>
    </source>
</evidence>
<evidence type="ECO:0000312" key="4">
    <source>
        <dbReference type="EMBL" id="AAX08812.1"/>
    </source>
</evidence>
<proteinExistence type="evidence at transcript level"/>
<accession>Q5E9X5</accession>
<comment type="function">
    <text evidence="1">As part of AP-5, a probable fifth adaptor protein complex it may be involved in endosomal transport.</text>
</comment>
<comment type="subunit">
    <text evidence="1">Probably part of the adaptor protein complex 5 (AP-5) a tetramer composed of AP5B1, AP5M1, AP5S1 and AP5Z1.</text>
</comment>
<comment type="subcellular location">
    <subcellularLocation>
        <location>Cytoplasm</location>
        <location>Cytosol</location>
    </subcellularLocation>
    <subcellularLocation>
        <location evidence="1">Late endosome membrane</location>
        <topology evidence="1">Peripheral membrane protein</topology>
        <orientation evidence="1">Cytoplasmic side</orientation>
    </subcellularLocation>
    <subcellularLocation>
        <location evidence="1">Lysosome membrane</location>
        <topology evidence="1">Peripheral membrane protein</topology>
        <orientation evidence="1">Cytoplasmic side</orientation>
    </subcellularLocation>
    <text evidence="1">May cycle on and off membranes.</text>
</comment>
<comment type="similarity">
    <text evidence="2">Belongs to the adaptor complexes medium subunit family.</text>
</comment>
<dbReference type="EMBL" id="BT020795">
    <property type="protein sequence ID" value="AAX08812.1"/>
    <property type="molecule type" value="mRNA"/>
</dbReference>
<dbReference type="RefSeq" id="NP_001015670.1">
    <property type="nucleotide sequence ID" value="NM_001015670.1"/>
</dbReference>
<dbReference type="SMR" id="Q5E9X5"/>
<dbReference type="FunCoup" id="Q5E9X5">
    <property type="interactions" value="3647"/>
</dbReference>
<dbReference type="STRING" id="9913.ENSBTAP00000017337"/>
<dbReference type="PaxDb" id="9913-ENSBTAP00000017337"/>
<dbReference type="GeneID" id="539663"/>
<dbReference type="KEGG" id="bta:539663"/>
<dbReference type="CTD" id="55745"/>
<dbReference type="VEuPathDB" id="HostDB:ENSBTAG00000013043"/>
<dbReference type="eggNOG" id="KOG0937">
    <property type="taxonomic scope" value="Eukaryota"/>
</dbReference>
<dbReference type="HOGENOM" id="CLU_033295_0_0_1"/>
<dbReference type="InParanoid" id="Q5E9X5"/>
<dbReference type="OMA" id="KEHPTDY"/>
<dbReference type="OrthoDB" id="1877176at2759"/>
<dbReference type="TreeFam" id="TF331963"/>
<dbReference type="Proteomes" id="UP000009136">
    <property type="component" value="Chromosome 10"/>
</dbReference>
<dbReference type="Bgee" id="ENSBTAG00000013043">
    <property type="expression patterns" value="Expressed in oocyte and 108 other cell types or tissues"/>
</dbReference>
<dbReference type="GO" id="GO:0030119">
    <property type="term" value="C:AP-type membrane coat adaptor complex"/>
    <property type="evidence" value="ECO:0000250"/>
    <property type="project" value="UniProtKB"/>
</dbReference>
<dbReference type="GO" id="GO:0005829">
    <property type="term" value="C:cytosol"/>
    <property type="evidence" value="ECO:0000250"/>
    <property type="project" value="UniProtKB"/>
</dbReference>
<dbReference type="GO" id="GO:0005770">
    <property type="term" value="C:late endosome"/>
    <property type="evidence" value="ECO:0000250"/>
    <property type="project" value="UniProtKB"/>
</dbReference>
<dbReference type="GO" id="GO:0031902">
    <property type="term" value="C:late endosome membrane"/>
    <property type="evidence" value="ECO:0007669"/>
    <property type="project" value="UniProtKB-SubCell"/>
</dbReference>
<dbReference type="GO" id="GO:0005765">
    <property type="term" value="C:lysosomal membrane"/>
    <property type="evidence" value="ECO:0007669"/>
    <property type="project" value="UniProtKB-SubCell"/>
</dbReference>
<dbReference type="GO" id="GO:0005764">
    <property type="term" value="C:lysosome"/>
    <property type="evidence" value="ECO:0000250"/>
    <property type="project" value="UniProtKB"/>
</dbReference>
<dbReference type="GO" id="GO:0016020">
    <property type="term" value="C:membrane"/>
    <property type="evidence" value="ECO:0000250"/>
    <property type="project" value="UniProtKB"/>
</dbReference>
<dbReference type="GO" id="GO:0016197">
    <property type="term" value="P:endosomal transport"/>
    <property type="evidence" value="ECO:0000250"/>
    <property type="project" value="UniProtKB"/>
</dbReference>
<dbReference type="GO" id="GO:0015031">
    <property type="term" value="P:protein transport"/>
    <property type="evidence" value="ECO:0007669"/>
    <property type="project" value="UniProtKB-KW"/>
</dbReference>
<dbReference type="CDD" id="cd09256">
    <property type="entry name" value="AP_MuD_MHD"/>
    <property type="match status" value="1"/>
</dbReference>
<dbReference type="FunFam" id="2.60.40.1170:FF:000014">
    <property type="entry name" value="AP-5 complex subunit mu-1 isoform X1"/>
    <property type="match status" value="1"/>
</dbReference>
<dbReference type="Gene3D" id="2.60.40.1170">
    <property type="entry name" value="Mu homology domain, subdomain B"/>
    <property type="match status" value="2"/>
</dbReference>
<dbReference type="InterPro" id="IPR036168">
    <property type="entry name" value="AP2_Mu_C_sf"/>
</dbReference>
<dbReference type="InterPro" id="IPR039591">
    <property type="entry name" value="AP5M1"/>
</dbReference>
<dbReference type="InterPro" id="IPR028565">
    <property type="entry name" value="MHD"/>
</dbReference>
<dbReference type="PANTHER" id="PTHR16082">
    <property type="entry name" value="AP-5 COMPLEX SUBUNIT MU-1"/>
    <property type="match status" value="1"/>
</dbReference>
<dbReference type="PANTHER" id="PTHR16082:SF2">
    <property type="entry name" value="AP-5 COMPLEX SUBUNIT MU-1"/>
    <property type="match status" value="1"/>
</dbReference>
<dbReference type="Pfam" id="PF00928">
    <property type="entry name" value="Adap_comp_sub"/>
    <property type="match status" value="1"/>
</dbReference>
<dbReference type="SUPFAM" id="SSF49447">
    <property type="entry name" value="Second domain of Mu2 adaptin subunit (ap50) of ap2 adaptor"/>
    <property type="match status" value="1"/>
</dbReference>
<dbReference type="PROSITE" id="PS51072">
    <property type="entry name" value="MHD"/>
    <property type="match status" value="1"/>
</dbReference>
<feature type="chain" id="PRO_0000374053" description="AP-5 complex subunit mu-1">
    <location>
        <begin position="1"/>
        <end position="490"/>
    </location>
</feature>
<feature type="domain" description="MHD" evidence="3">
    <location>
        <begin position="206"/>
        <end position="476"/>
    </location>
</feature>